<accession>A8MJW1</accession>
<keyword id="KW-0066">ATP synthesis</keyword>
<keyword id="KW-0067">ATP-binding</keyword>
<keyword id="KW-1003">Cell membrane</keyword>
<keyword id="KW-0139">CF(1)</keyword>
<keyword id="KW-0375">Hydrogen ion transport</keyword>
<keyword id="KW-0406">Ion transport</keyword>
<keyword id="KW-0472">Membrane</keyword>
<keyword id="KW-0547">Nucleotide-binding</keyword>
<keyword id="KW-1185">Reference proteome</keyword>
<keyword id="KW-1278">Translocase</keyword>
<keyword id="KW-0813">Transport</keyword>
<dbReference type="EC" id="7.1.2.2" evidence="1"/>
<dbReference type="EMBL" id="CP000853">
    <property type="protein sequence ID" value="ABW20093.1"/>
    <property type="molecule type" value="Genomic_DNA"/>
</dbReference>
<dbReference type="RefSeq" id="WP_012160400.1">
    <property type="nucleotide sequence ID" value="NC_009922.1"/>
</dbReference>
<dbReference type="SMR" id="A8MJW1"/>
<dbReference type="STRING" id="350688.Clos_2562"/>
<dbReference type="KEGG" id="aoe:Clos_2562"/>
<dbReference type="eggNOG" id="COG0056">
    <property type="taxonomic scope" value="Bacteria"/>
</dbReference>
<dbReference type="HOGENOM" id="CLU_010091_2_1_9"/>
<dbReference type="OrthoDB" id="9803053at2"/>
<dbReference type="Proteomes" id="UP000000269">
    <property type="component" value="Chromosome"/>
</dbReference>
<dbReference type="GO" id="GO:0005886">
    <property type="term" value="C:plasma membrane"/>
    <property type="evidence" value="ECO:0007669"/>
    <property type="project" value="UniProtKB-SubCell"/>
</dbReference>
<dbReference type="GO" id="GO:0045259">
    <property type="term" value="C:proton-transporting ATP synthase complex"/>
    <property type="evidence" value="ECO:0007669"/>
    <property type="project" value="UniProtKB-KW"/>
</dbReference>
<dbReference type="GO" id="GO:0043531">
    <property type="term" value="F:ADP binding"/>
    <property type="evidence" value="ECO:0007669"/>
    <property type="project" value="TreeGrafter"/>
</dbReference>
<dbReference type="GO" id="GO:0005524">
    <property type="term" value="F:ATP binding"/>
    <property type="evidence" value="ECO:0007669"/>
    <property type="project" value="UniProtKB-UniRule"/>
</dbReference>
<dbReference type="GO" id="GO:0046933">
    <property type="term" value="F:proton-transporting ATP synthase activity, rotational mechanism"/>
    <property type="evidence" value="ECO:0007669"/>
    <property type="project" value="UniProtKB-UniRule"/>
</dbReference>
<dbReference type="CDD" id="cd18113">
    <property type="entry name" value="ATP-synt_F1_alpha_C"/>
    <property type="match status" value="1"/>
</dbReference>
<dbReference type="CDD" id="cd18116">
    <property type="entry name" value="ATP-synt_F1_alpha_N"/>
    <property type="match status" value="1"/>
</dbReference>
<dbReference type="CDD" id="cd01132">
    <property type="entry name" value="F1-ATPase_alpha_CD"/>
    <property type="match status" value="1"/>
</dbReference>
<dbReference type="FunFam" id="1.20.150.20:FF:000001">
    <property type="entry name" value="ATP synthase subunit alpha"/>
    <property type="match status" value="1"/>
</dbReference>
<dbReference type="FunFam" id="2.40.30.20:FF:000001">
    <property type="entry name" value="ATP synthase subunit alpha"/>
    <property type="match status" value="1"/>
</dbReference>
<dbReference type="FunFam" id="3.40.50.300:FF:000002">
    <property type="entry name" value="ATP synthase subunit alpha"/>
    <property type="match status" value="1"/>
</dbReference>
<dbReference type="Gene3D" id="2.40.30.20">
    <property type="match status" value="1"/>
</dbReference>
<dbReference type="Gene3D" id="1.20.150.20">
    <property type="entry name" value="ATP synthase alpha/beta chain, C-terminal domain"/>
    <property type="match status" value="1"/>
</dbReference>
<dbReference type="Gene3D" id="3.40.50.300">
    <property type="entry name" value="P-loop containing nucleotide triphosphate hydrolases"/>
    <property type="match status" value="1"/>
</dbReference>
<dbReference type="HAMAP" id="MF_01346">
    <property type="entry name" value="ATP_synth_alpha_bact"/>
    <property type="match status" value="1"/>
</dbReference>
<dbReference type="InterPro" id="IPR023366">
    <property type="entry name" value="ATP_synth_asu-like_sf"/>
</dbReference>
<dbReference type="InterPro" id="IPR000793">
    <property type="entry name" value="ATP_synth_asu_C"/>
</dbReference>
<dbReference type="InterPro" id="IPR038376">
    <property type="entry name" value="ATP_synth_asu_C_sf"/>
</dbReference>
<dbReference type="InterPro" id="IPR033732">
    <property type="entry name" value="ATP_synth_F1_a_nt-bd_dom"/>
</dbReference>
<dbReference type="InterPro" id="IPR005294">
    <property type="entry name" value="ATP_synth_F1_asu"/>
</dbReference>
<dbReference type="InterPro" id="IPR020003">
    <property type="entry name" value="ATPase_a/bsu_AS"/>
</dbReference>
<dbReference type="InterPro" id="IPR004100">
    <property type="entry name" value="ATPase_F1/V1/A1_a/bsu_N"/>
</dbReference>
<dbReference type="InterPro" id="IPR036121">
    <property type="entry name" value="ATPase_F1/V1/A1_a/bsu_N_sf"/>
</dbReference>
<dbReference type="InterPro" id="IPR000194">
    <property type="entry name" value="ATPase_F1/V1/A1_a/bsu_nucl-bd"/>
</dbReference>
<dbReference type="InterPro" id="IPR027417">
    <property type="entry name" value="P-loop_NTPase"/>
</dbReference>
<dbReference type="NCBIfam" id="TIGR00962">
    <property type="entry name" value="atpA"/>
    <property type="match status" value="1"/>
</dbReference>
<dbReference type="NCBIfam" id="NF009884">
    <property type="entry name" value="PRK13343.1"/>
    <property type="match status" value="1"/>
</dbReference>
<dbReference type="PANTHER" id="PTHR48082">
    <property type="entry name" value="ATP SYNTHASE SUBUNIT ALPHA, MITOCHONDRIAL"/>
    <property type="match status" value="1"/>
</dbReference>
<dbReference type="PANTHER" id="PTHR48082:SF2">
    <property type="entry name" value="ATP SYNTHASE SUBUNIT ALPHA, MITOCHONDRIAL"/>
    <property type="match status" value="1"/>
</dbReference>
<dbReference type="Pfam" id="PF00006">
    <property type="entry name" value="ATP-synt_ab"/>
    <property type="match status" value="1"/>
</dbReference>
<dbReference type="Pfam" id="PF00306">
    <property type="entry name" value="ATP-synt_ab_C"/>
    <property type="match status" value="1"/>
</dbReference>
<dbReference type="Pfam" id="PF02874">
    <property type="entry name" value="ATP-synt_ab_N"/>
    <property type="match status" value="1"/>
</dbReference>
<dbReference type="PIRSF" id="PIRSF039088">
    <property type="entry name" value="F_ATPase_subunit_alpha"/>
    <property type="match status" value="1"/>
</dbReference>
<dbReference type="SUPFAM" id="SSF47917">
    <property type="entry name" value="C-terminal domain of alpha and beta subunits of F1 ATP synthase"/>
    <property type="match status" value="1"/>
</dbReference>
<dbReference type="SUPFAM" id="SSF50615">
    <property type="entry name" value="N-terminal domain of alpha and beta subunits of F1 ATP synthase"/>
    <property type="match status" value="1"/>
</dbReference>
<dbReference type="SUPFAM" id="SSF52540">
    <property type="entry name" value="P-loop containing nucleoside triphosphate hydrolases"/>
    <property type="match status" value="1"/>
</dbReference>
<dbReference type="PROSITE" id="PS00152">
    <property type="entry name" value="ATPASE_ALPHA_BETA"/>
    <property type="match status" value="1"/>
</dbReference>
<reference key="1">
    <citation type="submission" date="2007-10" db="EMBL/GenBank/DDBJ databases">
        <title>Complete genome of Alkaliphilus oremlandii OhILAs.</title>
        <authorList>
            <person name="Copeland A."/>
            <person name="Lucas S."/>
            <person name="Lapidus A."/>
            <person name="Barry K."/>
            <person name="Detter J.C."/>
            <person name="Glavina del Rio T."/>
            <person name="Hammon N."/>
            <person name="Israni S."/>
            <person name="Dalin E."/>
            <person name="Tice H."/>
            <person name="Pitluck S."/>
            <person name="Chain P."/>
            <person name="Malfatti S."/>
            <person name="Shin M."/>
            <person name="Vergez L."/>
            <person name="Schmutz J."/>
            <person name="Larimer F."/>
            <person name="Land M."/>
            <person name="Hauser L."/>
            <person name="Kyrpides N."/>
            <person name="Mikhailova N."/>
            <person name="Stolz J.F."/>
            <person name="Dawson A."/>
            <person name="Fisher E."/>
            <person name="Crable B."/>
            <person name="Perera E."/>
            <person name="Lisak J."/>
            <person name="Ranganathan M."/>
            <person name="Basu P."/>
            <person name="Richardson P."/>
        </authorList>
    </citation>
    <scope>NUCLEOTIDE SEQUENCE [LARGE SCALE GENOMIC DNA]</scope>
    <source>
        <strain>OhILAs</strain>
    </source>
</reference>
<sequence>MNLRPEEISSIIKEQIKRYENKLEVKDVGTVIQVGDGIARIHGLEKCMAGELLEFPNAVYGMAQNLEEDNVGCVLLGSDATIREGDIVKRTGRIVEVPVGEALLGRVVNALGQPIDGKGPINTDAYREVERVAPGIISRKSVHEPLQTGIKAIDSMIPIGRGQRELIIGDRQTGKTALAIDTIINQKNTDVICIYVAIGQKKSTVAQIKDSLEKAGAMEYTIIVSSTADELAPLQYLAPYAGCAMGEEFMEKGKHVLIIYDDLSKHAVAYRAMSLLLRRPPGREAYPGDVFYLHSRLLERAAKLSDERGGGSLTALPIIETQAGDVSAYIPTNVISITDGQIFLETELFNAGIRPAVNPGISVSRVGGNAQIKAMKKVAGTLRLELAQYRELAAFAQFGSDLDKETQERLSQGERILEILKQPQYDPMPVEKQIMMIYATTKKYLTDIAVEDIRDFESGFLRFMDNEHPEVGKDIVATGSISEETEAKLKEAIESFKKQFKAERE</sequence>
<evidence type="ECO:0000255" key="1">
    <source>
        <dbReference type="HAMAP-Rule" id="MF_01346"/>
    </source>
</evidence>
<comment type="function">
    <text evidence="1">Produces ATP from ADP in the presence of a proton gradient across the membrane. The alpha chain is a regulatory subunit.</text>
</comment>
<comment type="catalytic activity">
    <reaction evidence="1">
        <text>ATP + H2O + 4 H(+)(in) = ADP + phosphate + 5 H(+)(out)</text>
        <dbReference type="Rhea" id="RHEA:57720"/>
        <dbReference type="ChEBI" id="CHEBI:15377"/>
        <dbReference type="ChEBI" id="CHEBI:15378"/>
        <dbReference type="ChEBI" id="CHEBI:30616"/>
        <dbReference type="ChEBI" id="CHEBI:43474"/>
        <dbReference type="ChEBI" id="CHEBI:456216"/>
        <dbReference type="EC" id="7.1.2.2"/>
    </reaction>
</comment>
<comment type="subunit">
    <text evidence="1">F-type ATPases have 2 components, CF(1) - the catalytic core - and CF(0) - the membrane proton channel. CF(1) has five subunits: alpha(3), beta(3), gamma(1), delta(1), epsilon(1). CF(0) has three main subunits: a(1), b(2) and c(9-12). The alpha and beta chains form an alternating ring which encloses part of the gamma chain. CF(1) is attached to CF(0) by a central stalk formed by the gamma and epsilon chains, while a peripheral stalk is formed by the delta and b chains.</text>
</comment>
<comment type="subcellular location">
    <subcellularLocation>
        <location evidence="1">Cell membrane</location>
        <topology evidence="1">Peripheral membrane protein</topology>
    </subcellularLocation>
</comment>
<comment type="similarity">
    <text evidence="1">Belongs to the ATPase alpha/beta chains family.</text>
</comment>
<organism>
    <name type="scientific">Alkaliphilus oremlandii (strain OhILAs)</name>
    <name type="common">Clostridium oremlandii (strain OhILAs)</name>
    <dbReference type="NCBI Taxonomy" id="350688"/>
    <lineage>
        <taxon>Bacteria</taxon>
        <taxon>Bacillati</taxon>
        <taxon>Bacillota</taxon>
        <taxon>Clostridia</taxon>
        <taxon>Peptostreptococcales</taxon>
        <taxon>Natronincolaceae</taxon>
        <taxon>Alkaliphilus</taxon>
    </lineage>
</organism>
<feature type="chain" id="PRO_1000067708" description="ATP synthase subunit alpha">
    <location>
        <begin position="1"/>
        <end position="505"/>
    </location>
</feature>
<feature type="binding site" evidence="1">
    <location>
        <begin position="169"/>
        <end position="176"/>
    </location>
    <ligand>
        <name>ATP</name>
        <dbReference type="ChEBI" id="CHEBI:30616"/>
    </ligand>
</feature>
<feature type="site" description="Required for activity" evidence="1">
    <location>
        <position position="362"/>
    </location>
</feature>
<protein>
    <recommendedName>
        <fullName evidence="1">ATP synthase subunit alpha</fullName>
        <ecNumber evidence="1">7.1.2.2</ecNumber>
    </recommendedName>
    <alternativeName>
        <fullName evidence="1">ATP synthase F1 sector subunit alpha</fullName>
    </alternativeName>
    <alternativeName>
        <fullName evidence="1">F-ATPase subunit alpha</fullName>
    </alternativeName>
</protein>
<gene>
    <name evidence="1" type="primary">atpA</name>
    <name type="ordered locus">Clos_2562</name>
</gene>
<proteinExistence type="inferred from homology"/>
<name>ATPA_ALKOO</name>